<reference key="1">
    <citation type="journal article" date="2011" name="Nature">
        <title>Genome sequence and analysis of the tuber crop potato.</title>
        <authorList>
            <consortium name="The Potato Genome Sequencing Consortium"/>
        </authorList>
    </citation>
    <scope>NUCLEOTIDE SEQUENCE [LARGE SCALE GENOMIC DNA]</scope>
    <source>
        <strain>cv. DM1-3 516 R44</strain>
    </source>
</reference>
<feature type="transit peptide" description="Mitochondrion" evidence="2">
    <location>
        <begin position="1"/>
        <end position="35"/>
    </location>
</feature>
<feature type="chain" id="PRO_0000422943" description="External alternative NAD(P)H-ubiquinone oxidoreductase B1, mitochondrial">
    <location>
        <begin position="36"/>
        <end position="577"/>
    </location>
</feature>
<feature type="domain" description="EF-hand" evidence="3">
    <location>
        <begin position="378"/>
        <end position="413"/>
    </location>
</feature>
<feature type="short sequence motif" description="Microbody targeting signal" evidence="1">
    <location>
        <begin position="568"/>
        <end position="577"/>
    </location>
</feature>
<feature type="binding site" evidence="1">
    <location>
        <begin position="57"/>
        <end position="87"/>
    </location>
    <ligand>
        <name>FAD</name>
        <dbReference type="ChEBI" id="CHEBI:57692"/>
    </ligand>
</feature>
<feature type="binding site" evidence="1">
    <location>
        <begin position="221"/>
        <end position="257"/>
    </location>
    <ligand>
        <name>NAD(+)</name>
        <dbReference type="ChEBI" id="CHEBI:57540"/>
    </ligand>
</feature>
<feature type="binding site" evidence="3">
    <location>
        <position position="391"/>
    </location>
    <ligand>
        <name>Ca(2+)</name>
        <dbReference type="ChEBI" id="CHEBI:29108"/>
    </ligand>
</feature>
<feature type="binding site" evidence="3">
    <location>
        <position position="393"/>
    </location>
    <ligand>
        <name>Ca(2+)</name>
        <dbReference type="ChEBI" id="CHEBI:29108"/>
    </ligand>
</feature>
<feature type="binding site" evidence="3">
    <location>
        <position position="395"/>
    </location>
    <ligand>
        <name>Ca(2+)</name>
        <dbReference type="ChEBI" id="CHEBI:29108"/>
    </ligand>
</feature>
<feature type="binding site" evidence="3">
    <location>
        <position position="397"/>
    </location>
    <ligand>
        <name>Ca(2+)</name>
        <dbReference type="ChEBI" id="CHEBI:29108"/>
    </ligand>
</feature>
<feature type="binding site" evidence="3">
    <location>
        <position position="402"/>
    </location>
    <ligand>
        <name>Ca(2+)</name>
        <dbReference type="ChEBI" id="CHEBI:29108"/>
    </ligand>
</feature>
<gene>
    <name type="primary">NDB1</name>
    <name type="ORF">PGSC0003DMG400021670</name>
</gene>
<evidence type="ECO:0000250" key="1"/>
<evidence type="ECO:0000255" key="2"/>
<evidence type="ECO:0000255" key="3">
    <source>
        <dbReference type="PROSITE-ProRule" id="PRU00448"/>
    </source>
</evidence>
<evidence type="ECO:0000305" key="4"/>
<dbReference type="EC" id="1.6.5.9"/>
<dbReference type="EMBL" id="AEWC01039998">
    <property type="status" value="NOT_ANNOTATED_CDS"/>
    <property type="molecule type" value="Genomic_DNA"/>
</dbReference>
<dbReference type="SMR" id="M1BYJ7"/>
<dbReference type="FunCoup" id="M1BYJ7">
    <property type="interactions" value="752"/>
</dbReference>
<dbReference type="STRING" id="4113.M1BYJ7"/>
<dbReference type="PaxDb" id="4113-PGSC0003DMT400055796"/>
<dbReference type="EnsemblPlants" id="PGSC0003DMT400055796">
    <property type="protein sequence ID" value="PGSC0003DMT400055796"/>
    <property type="gene ID" value="PGSC0003DMG400021670"/>
</dbReference>
<dbReference type="Gramene" id="PGSC0003DMT400055796">
    <property type="protein sequence ID" value="PGSC0003DMT400055796"/>
    <property type="gene ID" value="PGSC0003DMG400021670"/>
</dbReference>
<dbReference type="eggNOG" id="KOG2495">
    <property type="taxonomic scope" value="Eukaryota"/>
</dbReference>
<dbReference type="HOGENOM" id="CLU_021377_1_0_1"/>
<dbReference type="InParanoid" id="M1BYJ7"/>
<dbReference type="Proteomes" id="UP000011115">
    <property type="component" value="Unassembled WGS sequence"/>
</dbReference>
<dbReference type="ExpressionAtlas" id="M1BYJ7">
    <property type="expression patterns" value="baseline"/>
</dbReference>
<dbReference type="GO" id="GO:0005743">
    <property type="term" value="C:mitochondrial inner membrane"/>
    <property type="evidence" value="ECO:0007669"/>
    <property type="project" value="UniProtKB-SubCell"/>
</dbReference>
<dbReference type="GO" id="GO:0005758">
    <property type="term" value="C:mitochondrial intermembrane space"/>
    <property type="evidence" value="ECO:0000250"/>
    <property type="project" value="UniProtKB"/>
</dbReference>
<dbReference type="GO" id="GO:0005739">
    <property type="term" value="C:mitochondrion"/>
    <property type="evidence" value="ECO:0000318"/>
    <property type="project" value="GO_Central"/>
</dbReference>
<dbReference type="GO" id="GO:0005777">
    <property type="term" value="C:peroxisome"/>
    <property type="evidence" value="ECO:0007669"/>
    <property type="project" value="UniProtKB-SubCell"/>
</dbReference>
<dbReference type="GO" id="GO:0005509">
    <property type="term" value="F:calcium ion binding"/>
    <property type="evidence" value="ECO:0007669"/>
    <property type="project" value="InterPro"/>
</dbReference>
<dbReference type="GO" id="GO:0050136">
    <property type="term" value="F:NADH:ubiquinone reductase (non-electrogenic) activity"/>
    <property type="evidence" value="ECO:0007669"/>
    <property type="project" value="UniProtKB-EC"/>
</dbReference>
<dbReference type="GO" id="GO:0016491">
    <property type="term" value="F:oxidoreductase activity"/>
    <property type="evidence" value="ECO:0000250"/>
    <property type="project" value="UniProtKB"/>
</dbReference>
<dbReference type="FunFam" id="3.50.50.100:FF:000002">
    <property type="entry name" value="External alternative NAD(P)H-ubiquinone oxidoreductase B1, mitochondrial"/>
    <property type="match status" value="1"/>
</dbReference>
<dbReference type="FunFam" id="3.50.50.100:FF:000008">
    <property type="entry name" value="External alternative NAD(P)H-ubiquinone oxidoreductase B1, mitochondrial"/>
    <property type="match status" value="1"/>
</dbReference>
<dbReference type="Gene3D" id="3.50.50.100">
    <property type="match status" value="2"/>
</dbReference>
<dbReference type="InterPro" id="IPR011992">
    <property type="entry name" value="EF-hand-dom_pair"/>
</dbReference>
<dbReference type="InterPro" id="IPR018247">
    <property type="entry name" value="EF_Hand_1_Ca_BS"/>
</dbReference>
<dbReference type="InterPro" id="IPR002048">
    <property type="entry name" value="EF_hand_dom"/>
</dbReference>
<dbReference type="InterPro" id="IPR036188">
    <property type="entry name" value="FAD/NAD-bd_sf"/>
</dbReference>
<dbReference type="InterPro" id="IPR023753">
    <property type="entry name" value="FAD/NAD-binding_dom"/>
</dbReference>
<dbReference type="InterPro" id="IPR045024">
    <property type="entry name" value="NDH-2"/>
</dbReference>
<dbReference type="InterPro" id="IPR054585">
    <property type="entry name" value="NDH2-like_C"/>
</dbReference>
<dbReference type="PANTHER" id="PTHR43706:SF3">
    <property type="entry name" value="EXTERNAL ALTERNATIVE NAD(P)H-UBIQUINONE OXIDOREDUCTASE B1, MITOCHONDRIAL"/>
    <property type="match status" value="1"/>
</dbReference>
<dbReference type="PANTHER" id="PTHR43706">
    <property type="entry name" value="NADH DEHYDROGENASE"/>
    <property type="match status" value="1"/>
</dbReference>
<dbReference type="Pfam" id="PF22366">
    <property type="entry name" value="NDH2_C"/>
    <property type="match status" value="1"/>
</dbReference>
<dbReference type="Pfam" id="PF07992">
    <property type="entry name" value="Pyr_redox_2"/>
    <property type="match status" value="1"/>
</dbReference>
<dbReference type="PRINTS" id="PR00368">
    <property type="entry name" value="FADPNR"/>
</dbReference>
<dbReference type="SMART" id="SM00054">
    <property type="entry name" value="EFh"/>
    <property type="match status" value="1"/>
</dbReference>
<dbReference type="SUPFAM" id="SSF47473">
    <property type="entry name" value="EF-hand"/>
    <property type="match status" value="1"/>
</dbReference>
<dbReference type="SUPFAM" id="SSF51905">
    <property type="entry name" value="FAD/NAD(P)-binding domain"/>
    <property type="match status" value="2"/>
</dbReference>
<dbReference type="PROSITE" id="PS00018">
    <property type="entry name" value="EF_HAND_1"/>
    <property type="match status" value="1"/>
</dbReference>
<dbReference type="PROSITE" id="PS50222">
    <property type="entry name" value="EF_HAND_2"/>
    <property type="match status" value="1"/>
</dbReference>
<name>ENDB1_SOLTU</name>
<keyword id="KW-0106">Calcium</keyword>
<keyword id="KW-0274">FAD</keyword>
<keyword id="KW-0285">Flavoprotein</keyword>
<keyword id="KW-0472">Membrane</keyword>
<keyword id="KW-0479">Metal-binding</keyword>
<keyword id="KW-0496">Mitochondrion</keyword>
<keyword id="KW-0999">Mitochondrion inner membrane</keyword>
<keyword id="KW-0520">NAD</keyword>
<keyword id="KW-0521">NADP</keyword>
<keyword id="KW-0560">Oxidoreductase</keyword>
<keyword id="KW-0576">Peroxisome</keyword>
<keyword id="KW-1185">Reference proteome</keyword>
<keyword id="KW-0809">Transit peptide</keyword>
<proteinExistence type="inferred from homology"/>
<accession>M1BYJ7</accession>
<organism>
    <name type="scientific">Solanum tuberosum</name>
    <name type="common">Potato</name>
    <dbReference type="NCBI Taxonomy" id="4113"/>
    <lineage>
        <taxon>Eukaryota</taxon>
        <taxon>Viridiplantae</taxon>
        <taxon>Streptophyta</taxon>
        <taxon>Embryophyta</taxon>
        <taxon>Tracheophyta</taxon>
        <taxon>Spermatophyta</taxon>
        <taxon>Magnoliopsida</taxon>
        <taxon>eudicotyledons</taxon>
        <taxon>Gunneridae</taxon>
        <taxon>Pentapetalae</taxon>
        <taxon>asterids</taxon>
        <taxon>lamiids</taxon>
        <taxon>Solanales</taxon>
        <taxon>Solanaceae</taxon>
        <taxon>Solanoideae</taxon>
        <taxon>Solaneae</taxon>
        <taxon>Solanum</taxon>
    </lineage>
</organism>
<protein>
    <recommendedName>
        <fullName>External alternative NAD(P)H-ubiquinone oxidoreductase B1, mitochondrial</fullName>
        <ecNumber>1.6.5.9</ecNumber>
    </recommendedName>
    <alternativeName>
        <fullName>External alternative NADH dehydrogenase NDB1</fullName>
    </alternativeName>
    <alternativeName>
        <fullName>NADH:ubiquinone reductase (non-electrogenic) NDB1</fullName>
    </alternativeName>
</protein>
<sequence length="577" mass="65189">MRGFTYLSKVLHSHSSYSKLLVLCSVSTGGLLVYAESNVESGKQVVEQNQPESKKKRVVVLGTGWGGTSFLKDVDISSYDVQVVSPRNYFAFTPLLPSVTCGTVEARSIVEPVRNIIKKRSGEIQFWEAECLKIDPENRTVSCRSGINDNLAGQNDFSLQYDYLVVAVGAQVNTFNTPGVMEHCHFLKEVEDAQRIRRTVIDCFEKSVIPGLSEEERRTNLHFVIVGGGPTGVEFAAELHDYVYEDLVKIYPSVKDFVKITVIQSGDHILNTFDERISSFAEQKFQRDGIEVSTGCRVTSVSDHFINMKVKSTGKHVEVPYGMVVWSTGVGTRPFVKDFMEQVGQEKRRILATDEWLRVKGCSNVYALGDCASIDQRKVMEDISAIFKAADKDDSGTLSIEEFRDVLEDIIIRYPQVDLYLKNKHLLEAKDLFRDSEGNEREEVDIEGFKLALSHVDSQMKSLPATAQVAAQQGTYLSRCLNRWDQCKSNPEGPRHFKSSGRHEFLPFEYRHLGQFAPLGGDQAAAELPGDWVSMGHSTQWLWYSVYASKQVSWRTRYLVVGDWVRRYIFGRDSSRI</sequence>
<comment type="function">
    <text evidence="1">Alternative NADH-ubiquinone oxidoreductase which catalyzes the oxidation of mitochondrial NADH does not translocate protons across the inner mitochondrial membrane. Calcium-dependent NAD(P)H dehydrogenase. Binds calcium ions (By similarity).</text>
</comment>
<comment type="catalytic activity">
    <reaction>
        <text>a quinone + NADH + H(+) = a quinol + NAD(+)</text>
        <dbReference type="Rhea" id="RHEA:46160"/>
        <dbReference type="ChEBI" id="CHEBI:15378"/>
        <dbReference type="ChEBI" id="CHEBI:24646"/>
        <dbReference type="ChEBI" id="CHEBI:57540"/>
        <dbReference type="ChEBI" id="CHEBI:57945"/>
        <dbReference type="ChEBI" id="CHEBI:132124"/>
        <dbReference type="EC" id="1.6.5.9"/>
    </reaction>
</comment>
<comment type="catalytic activity">
    <reaction>
        <text>a ubiquinone + NADH + H(+) = a ubiquinol + NAD(+)</text>
        <dbReference type="Rhea" id="RHEA:23152"/>
        <dbReference type="Rhea" id="RHEA-COMP:9565"/>
        <dbReference type="Rhea" id="RHEA-COMP:9566"/>
        <dbReference type="ChEBI" id="CHEBI:15378"/>
        <dbReference type="ChEBI" id="CHEBI:16389"/>
        <dbReference type="ChEBI" id="CHEBI:17976"/>
        <dbReference type="ChEBI" id="CHEBI:57540"/>
        <dbReference type="ChEBI" id="CHEBI:57945"/>
    </reaction>
</comment>
<comment type="cofactor">
    <cofactor evidence="1">
        <name>FAD</name>
        <dbReference type="ChEBI" id="CHEBI:57692"/>
    </cofactor>
    <text evidence="1">Binds 1 FAD per subunit.</text>
</comment>
<comment type="activity regulation">
    <text evidence="1">Activity is calcium-dependent with a more pronounced effect at higher pH.</text>
</comment>
<comment type="subcellular location">
    <subcellularLocation>
        <location>Mitochondrion inner membrane</location>
        <topology>Peripheral membrane protein</topology>
        <orientation>Intermembrane side</orientation>
    </subcellularLocation>
    <subcellularLocation>
        <location evidence="1">Peroxisome</location>
    </subcellularLocation>
</comment>
<comment type="similarity">
    <text evidence="4">Belongs to the NADH dehydrogenase family.</text>
</comment>